<keyword id="KW-1185">Reference proteome</keyword>
<keyword id="KW-0687">Ribonucleoprotein</keyword>
<keyword id="KW-0689">Ribosomal protein</keyword>
<keyword id="KW-0694">RNA-binding</keyword>
<keyword id="KW-0699">rRNA-binding</keyword>
<proteinExistence type="inferred from homology"/>
<protein>
    <recommendedName>
        <fullName evidence="1">Large ribosomal subunit protein uL3</fullName>
    </recommendedName>
    <alternativeName>
        <fullName evidence="3">50S ribosomal protein L3</fullName>
    </alternativeName>
</protein>
<feature type="chain" id="PRO_1000073252" description="Large ribosomal subunit protein uL3">
    <location>
        <begin position="1"/>
        <end position="341"/>
    </location>
</feature>
<feature type="region of interest" description="Disordered" evidence="2">
    <location>
        <begin position="1"/>
        <end position="31"/>
    </location>
</feature>
<feature type="region of interest" description="Disordered" evidence="2">
    <location>
        <begin position="234"/>
        <end position="261"/>
    </location>
</feature>
<comment type="function">
    <text evidence="1">One of the primary rRNA binding proteins, it binds directly near the 3'-end of the 23S rRNA, where it nucleates assembly of the 50S subunit.</text>
</comment>
<comment type="subunit">
    <text evidence="1">Part of the 50S ribosomal subunit. Forms a cluster with proteins L14 and L24e.</text>
</comment>
<comment type="similarity">
    <text evidence="1">Belongs to the universal ribosomal protein uL3 family.</text>
</comment>
<dbReference type="EMBL" id="CP000682">
    <property type="protein sequence ID" value="ABP94268.1"/>
    <property type="molecule type" value="Genomic_DNA"/>
</dbReference>
<dbReference type="RefSeq" id="WP_011921237.1">
    <property type="nucleotide sequence ID" value="NC_009440.1"/>
</dbReference>
<dbReference type="SMR" id="A4YCW6"/>
<dbReference type="STRING" id="399549.Msed_0091"/>
<dbReference type="GeneID" id="91754527"/>
<dbReference type="KEGG" id="mse:Msed_0091"/>
<dbReference type="eggNOG" id="arCOG04070">
    <property type="taxonomic scope" value="Archaea"/>
</dbReference>
<dbReference type="HOGENOM" id="CLU_033361_2_0_2"/>
<dbReference type="Proteomes" id="UP000000242">
    <property type="component" value="Chromosome"/>
</dbReference>
<dbReference type="GO" id="GO:0022625">
    <property type="term" value="C:cytosolic large ribosomal subunit"/>
    <property type="evidence" value="ECO:0007669"/>
    <property type="project" value="TreeGrafter"/>
</dbReference>
<dbReference type="GO" id="GO:0019843">
    <property type="term" value="F:rRNA binding"/>
    <property type="evidence" value="ECO:0007669"/>
    <property type="project" value="UniProtKB-UniRule"/>
</dbReference>
<dbReference type="GO" id="GO:0003735">
    <property type="term" value="F:structural constituent of ribosome"/>
    <property type="evidence" value="ECO:0007669"/>
    <property type="project" value="InterPro"/>
</dbReference>
<dbReference type="GO" id="GO:0006412">
    <property type="term" value="P:translation"/>
    <property type="evidence" value="ECO:0007669"/>
    <property type="project" value="UniProtKB-UniRule"/>
</dbReference>
<dbReference type="Gene3D" id="3.30.1430.10">
    <property type="match status" value="1"/>
</dbReference>
<dbReference type="Gene3D" id="4.10.960.10">
    <property type="entry name" value="Ribosomal protein L3, domain 3"/>
    <property type="match status" value="1"/>
</dbReference>
<dbReference type="Gene3D" id="2.40.30.10">
    <property type="entry name" value="Translation factors"/>
    <property type="match status" value="1"/>
</dbReference>
<dbReference type="HAMAP" id="MF_01325_A">
    <property type="entry name" value="Ribosomal_uL3_A"/>
    <property type="match status" value="1"/>
</dbReference>
<dbReference type="InterPro" id="IPR045077">
    <property type="entry name" value="L3_arc_euk"/>
</dbReference>
<dbReference type="InterPro" id="IPR044892">
    <property type="entry name" value="Ribosomal_L3_dom_3_arc_sf"/>
</dbReference>
<dbReference type="InterPro" id="IPR000597">
    <property type="entry name" value="Ribosomal_uL3"/>
</dbReference>
<dbReference type="InterPro" id="IPR019928">
    <property type="entry name" value="Ribosomal_uL3_arc"/>
</dbReference>
<dbReference type="InterPro" id="IPR019926">
    <property type="entry name" value="Ribosomal_uL3_CS"/>
</dbReference>
<dbReference type="InterPro" id="IPR009000">
    <property type="entry name" value="Transl_B-barrel_sf"/>
</dbReference>
<dbReference type="NCBIfam" id="TIGR03626">
    <property type="entry name" value="L3_arch"/>
    <property type="match status" value="1"/>
</dbReference>
<dbReference type="NCBIfam" id="NF003261">
    <property type="entry name" value="PRK04231.1"/>
    <property type="match status" value="1"/>
</dbReference>
<dbReference type="PANTHER" id="PTHR11363">
    <property type="entry name" value="60S RIBOSOMAL PROTEIN L3-RELATED"/>
    <property type="match status" value="1"/>
</dbReference>
<dbReference type="PANTHER" id="PTHR11363:SF5">
    <property type="entry name" value="LARGE RIBOSOMAL SUBUNIT PROTEIN UL3"/>
    <property type="match status" value="1"/>
</dbReference>
<dbReference type="Pfam" id="PF00297">
    <property type="entry name" value="Ribosomal_L3"/>
    <property type="match status" value="1"/>
</dbReference>
<dbReference type="SUPFAM" id="SSF50447">
    <property type="entry name" value="Translation proteins"/>
    <property type="match status" value="1"/>
</dbReference>
<dbReference type="PROSITE" id="PS00474">
    <property type="entry name" value="RIBOSOMAL_L3"/>
    <property type="match status" value="1"/>
</dbReference>
<reference key="1">
    <citation type="journal article" date="2008" name="Appl. Environ. Microbiol.">
        <title>The genome sequence of the metal-mobilizing, extremely thermoacidophilic archaeon Metallosphaera sedula provides insights into bioleaching-associated metabolism.</title>
        <authorList>
            <person name="Auernik K.S."/>
            <person name="Maezato Y."/>
            <person name="Blum P.H."/>
            <person name="Kelly R.M."/>
        </authorList>
    </citation>
    <scope>NUCLEOTIDE SEQUENCE [LARGE SCALE GENOMIC DNA]</scope>
    <source>
        <strain>ATCC 51363 / DSM 5348 / JCM 9185 / NBRC 15509 / TH2</strain>
    </source>
</reference>
<gene>
    <name evidence="1" type="primary">rpl3</name>
    <name type="ordered locus">Msed_0091</name>
</gene>
<name>RL3_METS5</name>
<accession>A4YCW6</accession>
<sequence length="341" mass="38332">MGHRKLSSPRRGSAGLRPRKRSEELLPSPRSYPEVNLPNPVTLGFVGYKVGMTHIFMIDEDRSSSMFGKEIYVPVTVLETPPIYVLALRAYGLNNRGEHSVMGEVWGDLGDFGKFITRRIRGLKIDKEKKEHQLKDIESNLESVSYFRLLVSTQPHLIPALGKKTPDIVEVQIGGGNTKNQLEYGLKLLGNTLSVRDVFKEGQLMDIIGVTKGHGFQGVIKRYGVQELPRWHKHRKGSRKVGTKGPSLGTPSYVPQPGQMGFHRRTEYNKRILKISDDTKLINPKGGFVRYGLVKNTYLLVQGSTIGSIKRPLFLRYPIRPYSAQLPVPKVTYVDVNSKQG</sequence>
<evidence type="ECO:0000255" key="1">
    <source>
        <dbReference type="HAMAP-Rule" id="MF_01325"/>
    </source>
</evidence>
<evidence type="ECO:0000256" key="2">
    <source>
        <dbReference type="SAM" id="MobiDB-lite"/>
    </source>
</evidence>
<evidence type="ECO:0000305" key="3"/>
<organism>
    <name type="scientific">Metallosphaera sedula (strain ATCC 51363 / DSM 5348 / JCM 9185 / NBRC 15509 / TH2)</name>
    <dbReference type="NCBI Taxonomy" id="399549"/>
    <lineage>
        <taxon>Archaea</taxon>
        <taxon>Thermoproteota</taxon>
        <taxon>Thermoprotei</taxon>
        <taxon>Sulfolobales</taxon>
        <taxon>Sulfolobaceae</taxon>
        <taxon>Metallosphaera</taxon>
    </lineage>
</organism>